<sequence length="93" mass="10577">MADITDIKSIIYTEKSLGLQEEGYVVIQTSEKMTKNQLKAVLKEYFGVTPVKINSLRMKGKTKRFRGVEGKRDNYKKFYVKLPEGASIESLAV</sequence>
<feature type="chain" id="PRO_1000068122" description="Large ribosomal subunit protein uL23">
    <location>
        <begin position="1"/>
        <end position="93"/>
    </location>
</feature>
<protein>
    <recommendedName>
        <fullName evidence="1">Large ribosomal subunit protein uL23</fullName>
    </recommendedName>
    <alternativeName>
        <fullName evidence="2">50S ribosomal protein L23</fullName>
    </alternativeName>
</protein>
<reference key="1">
    <citation type="journal article" date="2007" name="Proc. Natl. Acad. Sci. U.S.A.">
        <title>Deep-sea vent epsilon-proteobacterial genomes provide insights into emergence of pathogens.</title>
        <authorList>
            <person name="Nakagawa S."/>
            <person name="Takaki Y."/>
            <person name="Shimamura S."/>
            <person name="Reysenbach A.-L."/>
            <person name="Takai K."/>
            <person name="Horikoshi K."/>
        </authorList>
    </citation>
    <scope>NUCLEOTIDE SEQUENCE [LARGE SCALE GENOMIC DNA]</scope>
    <source>
        <strain>SB155-2</strain>
    </source>
</reference>
<dbReference type="EMBL" id="AP009178">
    <property type="protein sequence ID" value="BAF69339.1"/>
    <property type="molecule type" value="Genomic_DNA"/>
</dbReference>
<dbReference type="RefSeq" id="WP_012081602.1">
    <property type="nucleotide sequence ID" value="NC_009662.1"/>
</dbReference>
<dbReference type="SMR" id="A6Q1I0"/>
<dbReference type="FunCoup" id="A6Q1I0">
    <property type="interactions" value="438"/>
</dbReference>
<dbReference type="STRING" id="387092.NIS_0225"/>
<dbReference type="KEGG" id="nis:NIS_0225"/>
<dbReference type="eggNOG" id="COG0089">
    <property type="taxonomic scope" value="Bacteria"/>
</dbReference>
<dbReference type="HOGENOM" id="CLU_037562_3_1_7"/>
<dbReference type="InParanoid" id="A6Q1I0"/>
<dbReference type="OrthoDB" id="5339807at2"/>
<dbReference type="Proteomes" id="UP000001118">
    <property type="component" value="Chromosome"/>
</dbReference>
<dbReference type="GO" id="GO:1990904">
    <property type="term" value="C:ribonucleoprotein complex"/>
    <property type="evidence" value="ECO:0007669"/>
    <property type="project" value="UniProtKB-KW"/>
</dbReference>
<dbReference type="GO" id="GO:0005840">
    <property type="term" value="C:ribosome"/>
    <property type="evidence" value="ECO:0007669"/>
    <property type="project" value="UniProtKB-KW"/>
</dbReference>
<dbReference type="GO" id="GO:0019843">
    <property type="term" value="F:rRNA binding"/>
    <property type="evidence" value="ECO:0007669"/>
    <property type="project" value="UniProtKB-UniRule"/>
</dbReference>
<dbReference type="GO" id="GO:0003735">
    <property type="term" value="F:structural constituent of ribosome"/>
    <property type="evidence" value="ECO:0007669"/>
    <property type="project" value="InterPro"/>
</dbReference>
<dbReference type="GO" id="GO:0006412">
    <property type="term" value="P:translation"/>
    <property type="evidence" value="ECO:0007669"/>
    <property type="project" value="UniProtKB-UniRule"/>
</dbReference>
<dbReference type="Gene3D" id="3.30.70.330">
    <property type="match status" value="1"/>
</dbReference>
<dbReference type="HAMAP" id="MF_01369_B">
    <property type="entry name" value="Ribosomal_uL23_B"/>
    <property type="match status" value="1"/>
</dbReference>
<dbReference type="InterPro" id="IPR012677">
    <property type="entry name" value="Nucleotide-bd_a/b_plait_sf"/>
</dbReference>
<dbReference type="InterPro" id="IPR013025">
    <property type="entry name" value="Ribosomal_uL23-like"/>
</dbReference>
<dbReference type="InterPro" id="IPR012678">
    <property type="entry name" value="Ribosomal_uL23/eL15/eS24_sf"/>
</dbReference>
<dbReference type="NCBIfam" id="NF004362">
    <property type="entry name" value="PRK05738.2-2"/>
    <property type="match status" value="1"/>
</dbReference>
<dbReference type="Pfam" id="PF00276">
    <property type="entry name" value="Ribosomal_L23"/>
    <property type="match status" value="1"/>
</dbReference>
<dbReference type="SUPFAM" id="SSF54189">
    <property type="entry name" value="Ribosomal proteins S24e, L23 and L15e"/>
    <property type="match status" value="1"/>
</dbReference>
<organism>
    <name type="scientific">Nitratiruptor sp. (strain SB155-2)</name>
    <dbReference type="NCBI Taxonomy" id="387092"/>
    <lineage>
        <taxon>Bacteria</taxon>
        <taxon>Pseudomonadati</taxon>
        <taxon>Campylobacterota</taxon>
        <taxon>Epsilonproteobacteria</taxon>
        <taxon>Nautiliales</taxon>
        <taxon>Nitratiruptoraceae</taxon>
        <taxon>Nitratiruptor</taxon>
    </lineage>
</organism>
<comment type="function">
    <text evidence="1">One of the early assembly proteins it binds 23S rRNA. One of the proteins that surrounds the polypeptide exit tunnel on the outside of the ribosome. Forms the main docking site for trigger factor binding to the ribosome.</text>
</comment>
<comment type="subunit">
    <text evidence="1">Part of the 50S ribosomal subunit. Contacts protein L29, and trigger factor when it is bound to the ribosome.</text>
</comment>
<comment type="similarity">
    <text evidence="1">Belongs to the universal ribosomal protein uL23 family.</text>
</comment>
<proteinExistence type="inferred from homology"/>
<keyword id="KW-1185">Reference proteome</keyword>
<keyword id="KW-0687">Ribonucleoprotein</keyword>
<keyword id="KW-0689">Ribosomal protein</keyword>
<keyword id="KW-0694">RNA-binding</keyword>
<keyword id="KW-0699">rRNA-binding</keyword>
<evidence type="ECO:0000255" key="1">
    <source>
        <dbReference type="HAMAP-Rule" id="MF_01369"/>
    </source>
</evidence>
<evidence type="ECO:0000305" key="2"/>
<name>RL23_NITSB</name>
<accession>A6Q1I0</accession>
<gene>
    <name evidence="1" type="primary">rplW</name>
    <name type="ordered locus">NIS_0225</name>
</gene>